<comment type="function">
    <text evidence="1">Allows the formation of correctly charged Gln-tRNA(Gln) through the transamidation of misacylated Glu-tRNA(Gln) in organisms which lack glutaminyl-tRNA synthetase. The reaction takes place in the presence of glutamine and ATP through an activated gamma-phospho-Glu-tRNA(Gln).</text>
</comment>
<comment type="catalytic activity">
    <reaction evidence="1">
        <text>L-glutamyl-tRNA(Gln) + L-glutamine + ATP + H2O = L-glutaminyl-tRNA(Gln) + L-glutamate + ADP + phosphate + H(+)</text>
        <dbReference type="Rhea" id="RHEA:17521"/>
        <dbReference type="Rhea" id="RHEA-COMP:9681"/>
        <dbReference type="Rhea" id="RHEA-COMP:9684"/>
        <dbReference type="ChEBI" id="CHEBI:15377"/>
        <dbReference type="ChEBI" id="CHEBI:15378"/>
        <dbReference type="ChEBI" id="CHEBI:29985"/>
        <dbReference type="ChEBI" id="CHEBI:30616"/>
        <dbReference type="ChEBI" id="CHEBI:43474"/>
        <dbReference type="ChEBI" id="CHEBI:58359"/>
        <dbReference type="ChEBI" id="CHEBI:78520"/>
        <dbReference type="ChEBI" id="CHEBI:78521"/>
        <dbReference type="ChEBI" id="CHEBI:456216"/>
        <dbReference type="EC" id="6.3.5.7"/>
    </reaction>
</comment>
<comment type="subunit">
    <text evidence="1">Heterotrimer of A, B and C subunits.</text>
</comment>
<comment type="similarity">
    <text evidence="1">Belongs to the amidase family. GatA subfamily.</text>
</comment>
<dbReference type="EC" id="6.3.5.7" evidence="1"/>
<dbReference type="EMBL" id="CP000270">
    <property type="protein sequence ID" value="ABE28604.1"/>
    <property type="molecule type" value="Genomic_DNA"/>
</dbReference>
<dbReference type="RefSeq" id="WP_011486460.1">
    <property type="nucleotide sequence ID" value="NC_007951.1"/>
</dbReference>
<dbReference type="SMR" id="Q146Y5"/>
<dbReference type="STRING" id="266265.Bxe_A4396"/>
<dbReference type="KEGG" id="bxb:DR64_2071"/>
<dbReference type="KEGG" id="bxe:Bxe_A4396"/>
<dbReference type="PATRIC" id="fig|266265.5.peg.68"/>
<dbReference type="eggNOG" id="COG0154">
    <property type="taxonomic scope" value="Bacteria"/>
</dbReference>
<dbReference type="OrthoDB" id="9811471at2"/>
<dbReference type="Proteomes" id="UP000001817">
    <property type="component" value="Chromosome 1"/>
</dbReference>
<dbReference type="GO" id="GO:0030956">
    <property type="term" value="C:glutamyl-tRNA(Gln) amidotransferase complex"/>
    <property type="evidence" value="ECO:0007669"/>
    <property type="project" value="InterPro"/>
</dbReference>
<dbReference type="GO" id="GO:0005524">
    <property type="term" value="F:ATP binding"/>
    <property type="evidence" value="ECO:0007669"/>
    <property type="project" value="UniProtKB-KW"/>
</dbReference>
<dbReference type="GO" id="GO:0050567">
    <property type="term" value="F:glutaminyl-tRNA synthase (glutamine-hydrolyzing) activity"/>
    <property type="evidence" value="ECO:0007669"/>
    <property type="project" value="UniProtKB-UniRule"/>
</dbReference>
<dbReference type="GO" id="GO:0006412">
    <property type="term" value="P:translation"/>
    <property type="evidence" value="ECO:0007669"/>
    <property type="project" value="UniProtKB-UniRule"/>
</dbReference>
<dbReference type="Gene3D" id="3.90.1300.10">
    <property type="entry name" value="Amidase signature (AS) domain"/>
    <property type="match status" value="1"/>
</dbReference>
<dbReference type="HAMAP" id="MF_00120">
    <property type="entry name" value="GatA"/>
    <property type="match status" value="1"/>
</dbReference>
<dbReference type="InterPro" id="IPR000120">
    <property type="entry name" value="Amidase"/>
</dbReference>
<dbReference type="InterPro" id="IPR020556">
    <property type="entry name" value="Amidase_CS"/>
</dbReference>
<dbReference type="InterPro" id="IPR023631">
    <property type="entry name" value="Amidase_dom"/>
</dbReference>
<dbReference type="InterPro" id="IPR036928">
    <property type="entry name" value="AS_sf"/>
</dbReference>
<dbReference type="InterPro" id="IPR004412">
    <property type="entry name" value="GatA"/>
</dbReference>
<dbReference type="NCBIfam" id="TIGR00132">
    <property type="entry name" value="gatA"/>
    <property type="match status" value="1"/>
</dbReference>
<dbReference type="PANTHER" id="PTHR11895:SF151">
    <property type="entry name" value="GLUTAMYL-TRNA(GLN) AMIDOTRANSFERASE SUBUNIT A"/>
    <property type="match status" value="1"/>
</dbReference>
<dbReference type="PANTHER" id="PTHR11895">
    <property type="entry name" value="TRANSAMIDASE"/>
    <property type="match status" value="1"/>
</dbReference>
<dbReference type="Pfam" id="PF01425">
    <property type="entry name" value="Amidase"/>
    <property type="match status" value="1"/>
</dbReference>
<dbReference type="SUPFAM" id="SSF75304">
    <property type="entry name" value="Amidase signature (AS) enzymes"/>
    <property type="match status" value="1"/>
</dbReference>
<dbReference type="PROSITE" id="PS00571">
    <property type="entry name" value="AMIDASES"/>
    <property type="match status" value="1"/>
</dbReference>
<feature type="chain" id="PRO_1000015814" description="Glutamyl-tRNA(Gln) amidotransferase subunit A">
    <location>
        <begin position="1"/>
        <end position="495"/>
    </location>
</feature>
<feature type="active site" description="Charge relay system" evidence="1">
    <location>
        <position position="75"/>
    </location>
</feature>
<feature type="active site" description="Charge relay system" evidence="1">
    <location>
        <position position="150"/>
    </location>
</feature>
<feature type="active site" description="Acyl-ester intermediate" evidence="1">
    <location>
        <position position="174"/>
    </location>
</feature>
<evidence type="ECO:0000255" key="1">
    <source>
        <dbReference type="HAMAP-Rule" id="MF_00120"/>
    </source>
</evidence>
<name>GATA_PARXL</name>
<sequence length="495" mass="52845">MHEKSLTELRAALTARECSAVELAQLYLKRIEAANSLNAFIQVDPDLTLAQAKAADALLHTGHAGPLVGLPIAHKDVFVTKGWRSTAGSKMLSNYESPFDATVVARLQNAGMVCVGKTNMDEFAMGSSNENSYFGPVQNPWDVKAVPGGSSGGSAAAVAARLAPAATGTDTGGSIRQPASFSGITGIKPTYGRVSRYGMIAFASSLDQGGPMARSAADCATLLNAMAGFDGRDSTSLVRDDEDYTRYLGQPWKEDGAGKPLAGLRIGLPKEYFGAGLADDVRASIDAALKQYEALGATLVEVSLPKTELSIPVYYVIAPAEASSNLSRFDGVRFGHRAAEYRDLLDMYKKSRAEGFGPEVKRRILVGAYVLSHGYYDAYYLQAQKIRRIIAQDFQEAFRQCDVIMGPVAPTVAWDLGAKGDDPVQMYLADIYTLSVSLAGLPGMSVPCGFGAGANAQRPVGLQIIGNYFNEARMLQVADAFQRATDWHRKAPAGV</sequence>
<organism>
    <name type="scientific">Paraburkholderia xenovorans (strain LB400)</name>
    <dbReference type="NCBI Taxonomy" id="266265"/>
    <lineage>
        <taxon>Bacteria</taxon>
        <taxon>Pseudomonadati</taxon>
        <taxon>Pseudomonadota</taxon>
        <taxon>Betaproteobacteria</taxon>
        <taxon>Burkholderiales</taxon>
        <taxon>Burkholderiaceae</taxon>
        <taxon>Paraburkholderia</taxon>
    </lineage>
</organism>
<accession>Q146Y5</accession>
<protein>
    <recommendedName>
        <fullName evidence="1">Glutamyl-tRNA(Gln) amidotransferase subunit A</fullName>
        <shortName evidence="1">Glu-ADT subunit A</shortName>
        <ecNumber evidence="1">6.3.5.7</ecNumber>
    </recommendedName>
</protein>
<proteinExistence type="inferred from homology"/>
<reference key="1">
    <citation type="journal article" date="2006" name="Proc. Natl. Acad. Sci. U.S.A.">
        <title>Burkholderia xenovorans LB400 harbors a multi-replicon, 9.73-Mbp genome shaped for versatility.</title>
        <authorList>
            <person name="Chain P.S.G."/>
            <person name="Denef V.J."/>
            <person name="Konstantinidis K.T."/>
            <person name="Vergez L.M."/>
            <person name="Agullo L."/>
            <person name="Reyes V.L."/>
            <person name="Hauser L."/>
            <person name="Cordova M."/>
            <person name="Gomez L."/>
            <person name="Gonzalez M."/>
            <person name="Land M."/>
            <person name="Lao V."/>
            <person name="Larimer F."/>
            <person name="LiPuma J.J."/>
            <person name="Mahenthiralingam E."/>
            <person name="Malfatti S.A."/>
            <person name="Marx C.J."/>
            <person name="Parnell J.J."/>
            <person name="Ramette A."/>
            <person name="Richardson P."/>
            <person name="Seeger M."/>
            <person name="Smith D."/>
            <person name="Spilker T."/>
            <person name="Sul W.J."/>
            <person name="Tsoi T.V."/>
            <person name="Ulrich L.E."/>
            <person name="Zhulin I.B."/>
            <person name="Tiedje J.M."/>
        </authorList>
    </citation>
    <scope>NUCLEOTIDE SEQUENCE [LARGE SCALE GENOMIC DNA]</scope>
    <source>
        <strain>LB400</strain>
    </source>
</reference>
<gene>
    <name evidence="1" type="primary">gatA</name>
    <name type="ordered locus">Bxeno_A0066</name>
    <name type="ORF">Bxe_A4396</name>
</gene>
<keyword id="KW-0067">ATP-binding</keyword>
<keyword id="KW-0436">Ligase</keyword>
<keyword id="KW-0547">Nucleotide-binding</keyword>
<keyword id="KW-0648">Protein biosynthesis</keyword>
<keyword id="KW-1185">Reference proteome</keyword>